<accession>O31851</accession>
<comment type="cofactor">
    <cofactor>
        <name>Zn(2+)</name>
        <dbReference type="ChEBI" id="CHEBI:29105"/>
    </cofactor>
    <text>Binds 1 zinc ion per homodimer. The zinc ion is bound between 2 subunits and mediates dimerization.</text>
</comment>
<comment type="subunit">
    <text evidence="3 4">Monomer, and homodimer. Largely unstructured monomer in solution. Well-ordered homodimer in the crystal.</text>
</comment>
<comment type="subcellular location">
    <subcellularLocation>
        <location evidence="2">Cell membrane</location>
        <topology evidence="2">Lipid-anchor</topology>
    </subcellularLocation>
</comment>
<comment type="similarity">
    <text evidence="5">Belongs to the Cu-Zn superoxide dismutase family.</text>
</comment>
<dbReference type="EMBL" id="AF026147">
    <property type="protein sequence ID" value="AAC17861.1"/>
    <property type="molecule type" value="Genomic_DNA"/>
</dbReference>
<dbReference type="EMBL" id="AL009126">
    <property type="protein sequence ID" value="CAB13832.1"/>
    <property type="molecule type" value="Genomic_DNA"/>
</dbReference>
<dbReference type="PIR" id="B69907">
    <property type="entry name" value="B69907"/>
</dbReference>
<dbReference type="RefSeq" id="WP_004399243.1">
    <property type="nucleotide sequence ID" value="NZ_OZ025638.1"/>
</dbReference>
<dbReference type="PDB" id="1S4I">
    <property type="method" value="X-ray"/>
    <property type="resolution" value="1.80 A"/>
    <property type="chains" value="A/B/C/D=22-196"/>
</dbReference>
<dbReference type="PDB" id="1U3N">
    <property type="method" value="NMR"/>
    <property type="chains" value="A=35-196"/>
</dbReference>
<dbReference type="PDB" id="1XTL">
    <property type="method" value="X-ray"/>
    <property type="resolution" value="2.00 A"/>
    <property type="chains" value="A/B/C/D=22-196"/>
</dbReference>
<dbReference type="PDB" id="1XTM">
    <property type="method" value="X-ray"/>
    <property type="resolution" value="1.60 A"/>
    <property type="chains" value="A/B=22-196"/>
</dbReference>
<dbReference type="PDBsum" id="1S4I"/>
<dbReference type="PDBsum" id="1U3N"/>
<dbReference type="PDBsum" id="1XTL"/>
<dbReference type="PDBsum" id="1XTM"/>
<dbReference type="BMRB" id="O31851"/>
<dbReference type="SMR" id="O31851"/>
<dbReference type="FunCoup" id="O31851">
    <property type="interactions" value="193"/>
</dbReference>
<dbReference type="IntAct" id="O31851">
    <property type="interactions" value="19"/>
</dbReference>
<dbReference type="STRING" id="224308.BSU19400"/>
<dbReference type="PaxDb" id="224308-BSU19400"/>
<dbReference type="EnsemblBacteria" id="CAB13832">
    <property type="protein sequence ID" value="CAB13832"/>
    <property type="gene ID" value="BSU_19400"/>
</dbReference>
<dbReference type="GeneID" id="939502"/>
<dbReference type="KEGG" id="bsu:BSU19400"/>
<dbReference type="PATRIC" id="fig|224308.179.peg.2121"/>
<dbReference type="eggNOG" id="COG2032">
    <property type="taxonomic scope" value="Bacteria"/>
</dbReference>
<dbReference type="InParanoid" id="O31851"/>
<dbReference type="OrthoDB" id="9792957at2"/>
<dbReference type="PhylomeDB" id="O31851"/>
<dbReference type="BioCyc" id="BSUB:BSU19400-MONOMER"/>
<dbReference type="EvolutionaryTrace" id="O31851"/>
<dbReference type="Proteomes" id="UP000001570">
    <property type="component" value="Chromosome"/>
</dbReference>
<dbReference type="GO" id="GO:0005886">
    <property type="term" value="C:plasma membrane"/>
    <property type="evidence" value="ECO:0007669"/>
    <property type="project" value="UniProtKB-SubCell"/>
</dbReference>
<dbReference type="GO" id="GO:0005507">
    <property type="term" value="F:copper ion binding"/>
    <property type="evidence" value="ECO:0000318"/>
    <property type="project" value="GO_Central"/>
</dbReference>
<dbReference type="GO" id="GO:0042802">
    <property type="term" value="F:identical protein binding"/>
    <property type="evidence" value="ECO:0000315"/>
    <property type="project" value="CAFA"/>
</dbReference>
<dbReference type="GO" id="GO:0004784">
    <property type="term" value="F:superoxide dismutase activity"/>
    <property type="evidence" value="ECO:0000318"/>
    <property type="project" value="GO_Central"/>
</dbReference>
<dbReference type="GO" id="GO:0008270">
    <property type="term" value="F:zinc ion binding"/>
    <property type="evidence" value="ECO:0000315"/>
    <property type="project" value="CAFA"/>
</dbReference>
<dbReference type="GO" id="GO:0019430">
    <property type="term" value="P:removal of superoxide radicals"/>
    <property type="evidence" value="ECO:0000318"/>
    <property type="project" value="GO_Central"/>
</dbReference>
<dbReference type="CDD" id="cd00305">
    <property type="entry name" value="Cu-Zn_Superoxide_Dismutase"/>
    <property type="match status" value="1"/>
</dbReference>
<dbReference type="DisProt" id="DP00257"/>
<dbReference type="FunFam" id="2.60.40.200:FF:000005">
    <property type="entry name" value="Superoxide dismutase [Cu-Zn]"/>
    <property type="match status" value="1"/>
</dbReference>
<dbReference type="Gene3D" id="2.60.40.200">
    <property type="entry name" value="Superoxide dismutase, copper/zinc binding domain"/>
    <property type="match status" value="1"/>
</dbReference>
<dbReference type="InterPro" id="IPR036423">
    <property type="entry name" value="SOD-like_Cu/Zn_dom_sf"/>
</dbReference>
<dbReference type="InterPro" id="IPR024134">
    <property type="entry name" value="SOD_Cu/Zn_/chaperone"/>
</dbReference>
<dbReference type="InterPro" id="IPR001424">
    <property type="entry name" value="SOD_Cu_Zn_dom"/>
</dbReference>
<dbReference type="PANTHER" id="PTHR10003">
    <property type="entry name" value="SUPEROXIDE DISMUTASE CU-ZN -RELATED"/>
    <property type="match status" value="1"/>
</dbReference>
<dbReference type="Pfam" id="PF00080">
    <property type="entry name" value="Sod_Cu"/>
    <property type="match status" value="1"/>
</dbReference>
<dbReference type="SUPFAM" id="SSF49329">
    <property type="entry name" value="Cu,Zn superoxide dismutase-like"/>
    <property type="match status" value="1"/>
</dbReference>
<dbReference type="PROSITE" id="PS51257">
    <property type="entry name" value="PROKAR_LIPOPROTEIN"/>
    <property type="match status" value="1"/>
</dbReference>
<name>YOJM_BACSU</name>
<evidence type="ECO:0000255" key="1"/>
<evidence type="ECO:0000255" key="2">
    <source>
        <dbReference type="PROSITE-ProRule" id="PRU00303"/>
    </source>
</evidence>
<evidence type="ECO:0000269" key="3">
    <source>
    </source>
</evidence>
<evidence type="ECO:0000269" key="4">
    <source>
    </source>
</evidence>
<evidence type="ECO:0000305" key="5"/>
<evidence type="ECO:0007829" key="6">
    <source>
        <dbReference type="PDB" id="1S4I"/>
    </source>
</evidence>
<evidence type="ECO:0007829" key="7">
    <source>
        <dbReference type="PDB" id="1U3N"/>
    </source>
</evidence>
<evidence type="ECO:0007829" key="8">
    <source>
        <dbReference type="PDB" id="1XTM"/>
    </source>
</evidence>
<gene>
    <name type="primary">yojM</name>
    <name type="ordered locus">BSU19400</name>
</gene>
<sequence>MHRLLLLMMLTALGVAGCGQKKPPDPPNRVPEKKVVETSAFGHHVQLVNREGKAVGFIEIKESDDEGLDIHISANSLRPGASLGFHIYEKGSCVRPDFESAGGPFNPLNKEHGFNNPMGHHAGDLPNLEVGADGKVDVIMNAPDTSLKKGSKLNILDEDGSAFIIHEQADDYLTNPSGNSGARIVCGALLGNNEKQ</sequence>
<protein>
    <recommendedName>
        <fullName>Superoxide dismutase-like protein YojM</fullName>
    </recommendedName>
</protein>
<keyword id="KW-0002">3D-structure</keyword>
<keyword id="KW-1003">Cell membrane</keyword>
<keyword id="KW-0186">Copper</keyword>
<keyword id="KW-1015">Disulfide bond</keyword>
<keyword id="KW-0449">Lipoprotein</keyword>
<keyword id="KW-0472">Membrane</keyword>
<keyword id="KW-0479">Metal-binding</keyword>
<keyword id="KW-0564">Palmitate</keyword>
<keyword id="KW-1185">Reference proteome</keyword>
<keyword id="KW-0732">Signal</keyword>
<keyword id="KW-0862">Zinc</keyword>
<reference key="1">
    <citation type="journal article" date="1998" name="DNA Res.">
        <title>Sequence analysis of the Bacillus subtilis 168 chromosome region between the sspC and odhA loci (184 degrees-180 degrees).</title>
        <authorList>
            <person name="Ghim S.-Y."/>
            <person name="Choi S.-K."/>
            <person name="Shin B.-S."/>
            <person name="Jeong Y.-M."/>
            <person name="Sorokin A."/>
            <person name="Ehrlich S.D."/>
            <person name="Park S.-H."/>
        </authorList>
    </citation>
    <scope>NUCLEOTIDE SEQUENCE [GENOMIC DNA]</scope>
    <source>
        <strain>168</strain>
    </source>
</reference>
<reference key="2">
    <citation type="journal article" date="1997" name="Nature">
        <title>The complete genome sequence of the Gram-positive bacterium Bacillus subtilis.</title>
        <authorList>
            <person name="Kunst F."/>
            <person name="Ogasawara N."/>
            <person name="Moszer I."/>
            <person name="Albertini A.M."/>
            <person name="Alloni G."/>
            <person name="Azevedo V."/>
            <person name="Bertero M.G."/>
            <person name="Bessieres P."/>
            <person name="Bolotin A."/>
            <person name="Borchert S."/>
            <person name="Borriss R."/>
            <person name="Boursier L."/>
            <person name="Brans A."/>
            <person name="Braun M."/>
            <person name="Brignell S.C."/>
            <person name="Bron S."/>
            <person name="Brouillet S."/>
            <person name="Bruschi C.V."/>
            <person name="Caldwell B."/>
            <person name="Capuano V."/>
            <person name="Carter N.M."/>
            <person name="Choi S.-K."/>
            <person name="Codani J.-J."/>
            <person name="Connerton I.F."/>
            <person name="Cummings N.J."/>
            <person name="Daniel R.A."/>
            <person name="Denizot F."/>
            <person name="Devine K.M."/>
            <person name="Duesterhoeft A."/>
            <person name="Ehrlich S.D."/>
            <person name="Emmerson P.T."/>
            <person name="Entian K.-D."/>
            <person name="Errington J."/>
            <person name="Fabret C."/>
            <person name="Ferrari E."/>
            <person name="Foulger D."/>
            <person name="Fritz C."/>
            <person name="Fujita M."/>
            <person name="Fujita Y."/>
            <person name="Fuma S."/>
            <person name="Galizzi A."/>
            <person name="Galleron N."/>
            <person name="Ghim S.-Y."/>
            <person name="Glaser P."/>
            <person name="Goffeau A."/>
            <person name="Golightly E.J."/>
            <person name="Grandi G."/>
            <person name="Guiseppi G."/>
            <person name="Guy B.J."/>
            <person name="Haga K."/>
            <person name="Haiech J."/>
            <person name="Harwood C.R."/>
            <person name="Henaut A."/>
            <person name="Hilbert H."/>
            <person name="Holsappel S."/>
            <person name="Hosono S."/>
            <person name="Hullo M.-F."/>
            <person name="Itaya M."/>
            <person name="Jones L.-M."/>
            <person name="Joris B."/>
            <person name="Karamata D."/>
            <person name="Kasahara Y."/>
            <person name="Klaerr-Blanchard M."/>
            <person name="Klein C."/>
            <person name="Kobayashi Y."/>
            <person name="Koetter P."/>
            <person name="Koningstein G."/>
            <person name="Krogh S."/>
            <person name="Kumano M."/>
            <person name="Kurita K."/>
            <person name="Lapidus A."/>
            <person name="Lardinois S."/>
            <person name="Lauber J."/>
            <person name="Lazarevic V."/>
            <person name="Lee S.-M."/>
            <person name="Levine A."/>
            <person name="Liu H."/>
            <person name="Masuda S."/>
            <person name="Mauel C."/>
            <person name="Medigue C."/>
            <person name="Medina N."/>
            <person name="Mellado R.P."/>
            <person name="Mizuno M."/>
            <person name="Moestl D."/>
            <person name="Nakai S."/>
            <person name="Noback M."/>
            <person name="Noone D."/>
            <person name="O'Reilly M."/>
            <person name="Ogawa K."/>
            <person name="Ogiwara A."/>
            <person name="Oudega B."/>
            <person name="Park S.-H."/>
            <person name="Parro V."/>
            <person name="Pohl T.M."/>
            <person name="Portetelle D."/>
            <person name="Porwollik S."/>
            <person name="Prescott A.M."/>
            <person name="Presecan E."/>
            <person name="Pujic P."/>
            <person name="Purnelle B."/>
            <person name="Rapoport G."/>
            <person name="Rey M."/>
            <person name="Reynolds S."/>
            <person name="Rieger M."/>
            <person name="Rivolta C."/>
            <person name="Rocha E."/>
            <person name="Roche B."/>
            <person name="Rose M."/>
            <person name="Sadaie Y."/>
            <person name="Sato T."/>
            <person name="Scanlan E."/>
            <person name="Schleich S."/>
            <person name="Schroeter R."/>
            <person name="Scoffone F."/>
            <person name="Sekiguchi J."/>
            <person name="Sekowska A."/>
            <person name="Seror S.J."/>
            <person name="Serror P."/>
            <person name="Shin B.-S."/>
            <person name="Soldo B."/>
            <person name="Sorokin A."/>
            <person name="Tacconi E."/>
            <person name="Takagi T."/>
            <person name="Takahashi H."/>
            <person name="Takemaru K."/>
            <person name="Takeuchi M."/>
            <person name="Tamakoshi A."/>
            <person name="Tanaka T."/>
            <person name="Terpstra P."/>
            <person name="Tognoni A."/>
            <person name="Tosato V."/>
            <person name="Uchiyama S."/>
            <person name="Vandenbol M."/>
            <person name="Vannier F."/>
            <person name="Vassarotti A."/>
            <person name="Viari A."/>
            <person name="Wambutt R."/>
            <person name="Wedler E."/>
            <person name="Wedler H."/>
            <person name="Weitzenegger T."/>
            <person name="Winters P."/>
            <person name="Wipat A."/>
            <person name="Yamamoto H."/>
            <person name="Yamane K."/>
            <person name="Yasumoto K."/>
            <person name="Yata K."/>
            <person name="Yoshida K."/>
            <person name="Yoshikawa H.-F."/>
            <person name="Zumstein E."/>
            <person name="Yoshikawa H."/>
            <person name="Danchin A."/>
        </authorList>
    </citation>
    <scope>NUCLEOTIDE SEQUENCE [LARGE SCALE GENOMIC DNA]</scope>
    <source>
        <strain>168</strain>
    </source>
</reference>
<reference key="3">
    <citation type="journal article" date="2005" name="J. Am. Chem. Soc.">
        <title>From an inactive prokaryotic SOD homologue to an active protein through site-directed mutagenesis.</title>
        <authorList>
            <person name="Banci L."/>
            <person name="Benvenuti M."/>
            <person name="Bertini I."/>
            <person name="Cabelli D.E."/>
            <person name="Calderone V."/>
            <person name="Fantoni A."/>
            <person name="Mangani S."/>
            <person name="Migliardi M."/>
            <person name="Viezzoli M.S."/>
        </authorList>
    </citation>
    <scope>X-RAY CRYSTALLOGRAPHY (2.0 ANGSTROMS) OF 22-196 OF MUTANT HIS-88/HIS-104 IN COMPLEX WITH COPPER AND ZINC IONS</scope>
    <scope>MUTAGENESIS OF TYR-88 AND PRO-104</scope>
</reference>
<reference key="4">
    <citation type="journal article" date="2005" name="Proc. Natl. Acad. Sci. U.S.A.">
        <title>A prokaryotic superoxide dismutase paralog lacking two Cu ligands: from largely unstructured in solution to ordered in the crystal.</title>
        <authorList>
            <person name="Banci L."/>
            <person name="Bertini I."/>
            <person name="Calderone V."/>
            <person name="Cramaro F."/>
            <person name="Del Conte R."/>
            <person name="Fantoni A."/>
            <person name="Mangani S."/>
            <person name="Quattrone A."/>
            <person name="Viezzoli M.S."/>
        </authorList>
    </citation>
    <scope>X-RAY CRYSTALLOGRAPHY (1.8 ANGSTROMS) OF 22-196 IN COMPLEX WITH ZINC IONS</scope>
    <scope>SUBUNIT</scope>
</reference>
<proteinExistence type="evidence at protein level"/>
<organism>
    <name type="scientific">Bacillus subtilis (strain 168)</name>
    <dbReference type="NCBI Taxonomy" id="224308"/>
    <lineage>
        <taxon>Bacteria</taxon>
        <taxon>Bacillati</taxon>
        <taxon>Bacillota</taxon>
        <taxon>Bacilli</taxon>
        <taxon>Bacillales</taxon>
        <taxon>Bacillaceae</taxon>
        <taxon>Bacillus</taxon>
    </lineage>
</organism>
<feature type="signal peptide" evidence="2">
    <location>
        <begin position="1"/>
        <end position="17"/>
    </location>
</feature>
<feature type="chain" id="PRO_0000032842" description="Superoxide dismutase-like protein YojM">
    <location>
        <begin position="18"/>
        <end position="196"/>
    </location>
</feature>
<feature type="binding site">
    <location>
        <position position="71"/>
    </location>
    <ligand>
        <name>Zn(2+)</name>
        <dbReference type="ChEBI" id="CHEBI:29105"/>
        <note>structural; ligand shared between dimeric partners</note>
    </ligand>
</feature>
<feature type="binding site" evidence="1">
    <location>
        <position position="86"/>
    </location>
    <ligand>
        <name>Cu cation</name>
        <dbReference type="ChEBI" id="CHEBI:23378"/>
    </ligand>
</feature>
<feature type="binding site">
    <location>
        <position position="137"/>
    </location>
    <ligand>
        <name>Zn(2+)</name>
        <dbReference type="ChEBI" id="CHEBI:29105"/>
        <note>structural; ligand shared between dimeric partners</note>
    </ligand>
</feature>
<feature type="binding site" evidence="1">
    <location>
        <position position="166"/>
    </location>
    <ligand>
        <name>Cu cation</name>
        <dbReference type="ChEBI" id="CHEBI:23378"/>
    </ligand>
</feature>
<feature type="lipid moiety-binding region" description="N-palmitoyl cysteine" evidence="2">
    <location>
        <position position="18"/>
    </location>
</feature>
<feature type="lipid moiety-binding region" description="S-diacylglycerol cysteine" evidence="2">
    <location>
        <position position="18"/>
    </location>
</feature>
<feature type="disulfide bond">
    <location>
        <begin position="93"/>
        <end position="186"/>
    </location>
</feature>
<feature type="mutagenesis site" description="Leads to copper binding and enzyme activity; when associated with H-104." evidence="4">
    <original>Y</original>
    <variation>H</variation>
    <location>
        <position position="88"/>
    </location>
</feature>
<feature type="mutagenesis site" description="Leads to copper binding and enzyme activity; when associated with H-88." evidence="4">
    <original>P</original>
    <variation>H</variation>
    <location>
        <position position="104"/>
    </location>
</feature>
<feature type="strand" evidence="8">
    <location>
        <begin position="42"/>
        <end position="49"/>
    </location>
</feature>
<feature type="turn" evidence="7">
    <location>
        <begin position="50"/>
        <end position="52"/>
    </location>
</feature>
<feature type="strand" evidence="8">
    <location>
        <begin position="54"/>
        <end position="62"/>
    </location>
</feature>
<feature type="strand" evidence="8">
    <location>
        <begin position="64"/>
        <end position="74"/>
    </location>
</feature>
<feature type="strand" evidence="8">
    <location>
        <begin position="85"/>
        <end position="90"/>
    </location>
</feature>
<feature type="turn" evidence="7">
    <location>
        <begin position="91"/>
        <end position="93"/>
    </location>
</feature>
<feature type="turn" evidence="8">
    <location>
        <begin position="95"/>
        <end position="97"/>
    </location>
</feature>
<feature type="helix" evidence="8">
    <location>
        <begin position="99"/>
        <end position="101"/>
    </location>
</feature>
<feature type="strand" evidence="6">
    <location>
        <begin position="124"/>
        <end position="129"/>
    </location>
</feature>
<feature type="strand" evidence="8">
    <location>
        <begin position="136"/>
        <end position="142"/>
    </location>
</feature>
<feature type="strand" evidence="7">
    <location>
        <begin position="149"/>
        <end position="152"/>
    </location>
</feature>
<feature type="strand" evidence="8">
    <location>
        <begin position="154"/>
        <end position="157"/>
    </location>
</feature>
<feature type="strand" evidence="8">
    <location>
        <begin position="161"/>
        <end position="168"/>
    </location>
</feature>
<feature type="strand" evidence="8">
    <location>
        <begin position="172"/>
        <end position="174"/>
    </location>
</feature>
<feature type="turn" evidence="8">
    <location>
        <begin position="175"/>
        <end position="179"/>
    </location>
</feature>
<feature type="strand" evidence="8">
    <location>
        <begin position="182"/>
        <end position="189"/>
    </location>
</feature>